<proteinExistence type="evidence at transcript level"/>
<comment type="function">
    <text evidence="2">Cleaves the spore coat proteins SpoIVA and SafA. May cooperate with tgl to mediate the temperature-dependent cross-linking of coat proteins like GerQ.</text>
</comment>
<comment type="subcellular location">
    <subcellularLocation>
        <location evidence="1">Forespore outer membrane</location>
    </subcellularLocation>
    <text>Synthesized in the mother cell compartment and assembled on the surface of the forespore.</text>
</comment>
<comment type="developmental stage">
    <text>Expressed in the mother cell compartment from T4 of sporulation.</text>
</comment>
<comment type="induction">
    <text>Induced by SigK.</text>
</comment>
<comment type="disruption phenotype">
    <text evidence="1 3">According to PubMed:10714992, cells have an altered coat protein composition; CotT, YeeK, YxeE, CotF, SafA and SpoIVA proteins are present at increased levels and/or exist as precursors. According to PubMed:16751597, cells show no effects on vegetative growth or spore resistance to heat, chloroform or lysozyme. The germination of YabG mutant spores in L-alanine and in a mixture of L-asparagine, D-glucose, D-fructose and potassium chloride was the same as that of the wild-type spores. Heat treatment for 20 minutes at 60 degrees Celsius, which maximally activates the Tgl enzymatic activity, causes cross-linking of GerQ in isolated YabG-deleted spores but not in Tgl/YabG double-mutant spores. Additionally, the germination frequency of the Tgl/YabG double-mutant spores in the presence of L-alanine with or without heat activation at 60 degrees Celsius is lower than that of wild-type spores.</text>
</comment>
<comment type="similarity">
    <text evidence="4">Belongs to the peptidase U57 family.</text>
</comment>
<sequence>MQFQIGDMVARKSYQMDVLFRIIGIEQTSKGNSIAILHGDEVRLIADSDFSDLVAVKKDEQMMRKKKDESRMNESLELLRQDYKLLREKQEYYATSQYQHQEHYFHMPGKVLHLDGDEAYLKKCLNVYKKIGVPVYGIHCHEKKMSASIEVLLDKYRPDILVITGHDAYSKQKGGIDDLNAYRHSKHFVETVQTARKKIPHLDQLVIFAGACQSHFESLIRAGANFASSPSRVNIHALDPVYIVAKISFTPFMERINVWEVLRNTLTREKGLGGIETRGVLRIGMPYKSN</sequence>
<gene>
    <name type="primary">yabG</name>
    <name type="ordered locus">BSU00430</name>
</gene>
<reference key="1">
    <citation type="journal article" date="1994" name="DNA Res.">
        <title>Systematic sequencing of the 180 kilobase region of the Bacillus subtilis chromosome containing the replication origin.</title>
        <authorList>
            <person name="Ogasawara N."/>
            <person name="Nakai S."/>
            <person name="Yoshikawa H."/>
        </authorList>
    </citation>
    <scope>NUCLEOTIDE SEQUENCE [GENOMIC DNA]</scope>
    <source>
        <strain>168</strain>
    </source>
</reference>
<reference key="2">
    <citation type="journal article" date="1997" name="Nature">
        <title>The complete genome sequence of the Gram-positive bacterium Bacillus subtilis.</title>
        <authorList>
            <person name="Kunst F."/>
            <person name="Ogasawara N."/>
            <person name="Moszer I."/>
            <person name="Albertini A.M."/>
            <person name="Alloni G."/>
            <person name="Azevedo V."/>
            <person name="Bertero M.G."/>
            <person name="Bessieres P."/>
            <person name="Bolotin A."/>
            <person name="Borchert S."/>
            <person name="Borriss R."/>
            <person name="Boursier L."/>
            <person name="Brans A."/>
            <person name="Braun M."/>
            <person name="Brignell S.C."/>
            <person name="Bron S."/>
            <person name="Brouillet S."/>
            <person name="Bruschi C.V."/>
            <person name="Caldwell B."/>
            <person name="Capuano V."/>
            <person name="Carter N.M."/>
            <person name="Choi S.-K."/>
            <person name="Codani J.-J."/>
            <person name="Connerton I.F."/>
            <person name="Cummings N.J."/>
            <person name="Daniel R.A."/>
            <person name="Denizot F."/>
            <person name="Devine K.M."/>
            <person name="Duesterhoeft A."/>
            <person name="Ehrlich S.D."/>
            <person name="Emmerson P.T."/>
            <person name="Entian K.-D."/>
            <person name="Errington J."/>
            <person name="Fabret C."/>
            <person name="Ferrari E."/>
            <person name="Foulger D."/>
            <person name="Fritz C."/>
            <person name="Fujita M."/>
            <person name="Fujita Y."/>
            <person name="Fuma S."/>
            <person name="Galizzi A."/>
            <person name="Galleron N."/>
            <person name="Ghim S.-Y."/>
            <person name="Glaser P."/>
            <person name="Goffeau A."/>
            <person name="Golightly E.J."/>
            <person name="Grandi G."/>
            <person name="Guiseppi G."/>
            <person name="Guy B.J."/>
            <person name="Haga K."/>
            <person name="Haiech J."/>
            <person name="Harwood C.R."/>
            <person name="Henaut A."/>
            <person name="Hilbert H."/>
            <person name="Holsappel S."/>
            <person name="Hosono S."/>
            <person name="Hullo M.-F."/>
            <person name="Itaya M."/>
            <person name="Jones L.-M."/>
            <person name="Joris B."/>
            <person name="Karamata D."/>
            <person name="Kasahara Y."/>
            <person name="Klaerr-Blanchard M."/>
            <person name="Klein C."/>
            <person name="Kobayashi Y."/>
            <person name="Koetter P."/>
            <person name="Koningstein G."/>
            <person name="Krogh S."/>
            <person name="Kumano M."/>
            <person name="Kurita K."/>
            <person name="Lapidus A."/>
            <person name="Lardinois S."/>
            <person name="Lauber J."/>
            <person name="Lazarevic V."/>
            <person name="Lee S.-M."/>
            <person name="Levine A."/>
            <person name="Liu H."/>
            <person name="Masuda S."/>
            <person name="Mauel C."/>
            <person name="Medigue C."/>
            <person name="Medina N."/>
            <person name="Mellado R.P."/>
            <person name="Mizuno M."/>
            <person name="Moestl D."/>
            <person name="Nakai S."/>
            <person name="Noback M."/>
            <person name="Noone D."/>
            <person name="O'Reilly M."/>
            <person name="Ogawa K."/>
            <person name="Ogiwara A."/>
            <person name="Oudega B."/>
            <person name="Park S.-H."/>
            <person name="Parro V."/>
            <person name="Pohl T.M."/>
            <person name="Portetelle D."/>
            <person name="Porwollik S."/>
            <person name="Prescott A.M."/>
            <person name="Presecan E."/>
            <person name="Pujic P."/>
            <person name="Purnelle B."/>
            <person name="Rapoport G."/>
            <person name="Rey M."/>
            <person name="Reynolds S."/>
            <person name="Rieger M."/>
            <person name="Rivolta C."/>
            <person name="Rocha E."/>
            <person name="Roche B."/>
            <person name="Rose M."/>
            <person name="Sadaie Y."/>
            <person name="Sato T."/>
            <person name="Scanlan E."/>
            <person name="Schleich S."/>
            <person name="Schroeter R."/>
            <person name="Scoffone F."/>
            <person name="Sekiguchi J."/>
            <person name="Sekowska A."/>
            <person name="Seror S.J."/>
            <person name="Serror P."/>
            <person name="Shin B.-S."/>
            <person name="Soldo B."/>
            <person name="Sorokin A."/>
            <person name="Tacconi E."/>
            <person name="Takagi T."/>
            <person name="Takahashi H."/>
            <person name="Takemaru K."/>
            <person name="Takeuchi M."/>
            <person name="Tamakoshi A."/>
            <person name="Tanaka T."/>
            <person name="Terpstra P."/>
            <person name="Tognoni A."/>
            <person name="Tosato V."/>
            <person name="Uchiyama S."/>
            <person name="Vandenbol M."/>
            <person name="Vannier F."/>
            <person name="Vassarotti A."/>
            <person name="Viari A."/>
            <person name="Wambutt R."/>
            <person name="Wedler E."/>
            <person name="Wedler H."/>
            <person name="Weitzenegger T."/>
            <person name="Winters P."/>
            <person name="Wipat A."/>
            <person name="Yamamoto H."/>
            <person name="Yamane K."/>
            <person name="Yasumoto K."/>
            <person name="Yata K."/>
            <person name="Yoshida K."/>
            <person name="Yoshikawa H.-F."/>
            <person name="Zumstein E."/>
            <person name="Yoshikawa H."/>
            <person name="Danchin A."/>
        </authorList>
    </citation>
    <scope>NUCLEOTIDE SEQUENCE [LARGE SCALE GENOMIC DNA]</scope>
    <source>
        <strain>168</strain>
    </source>
</reference>
<reference key="3">
    <citation type="journal article" date="2000" name="FEMS Microbiol. Lett.">
        <title>The yabG gene of Bacillus subtilis encodes a sporulation specific protease which is involved in the processing of several spore coat proteins.</title>
        <authorList>
            <person name="Takamatsu H."/>
            <person name="Imamura A."/>
            <person name="Kodama T."/>
            <person name="Asai K."/>
            <person name="Ogasawara N."/>
            <person name="Watabe K."/>
        </authorList>
    </citation>
    <scope>FUNCTION</scope>
    <source>
        <strain>168</strain>
    </source>
</reference>
<reference key="4">
    <citation type="journal article" date="2000" name="J. Bacteriol.">
        <title>The Bacillus subtilis yabG gene is transcribed by SigK RNA polymerase during sporulation, and yabG mutant spores have altered coat protein composition.</title>
        <authorList>
            <person name="Takamatsu H."/>
            <person name="Kodama T."/>
            <person name="Imamura A."/>
            <person name="Asai K."/>
            <person name="Kobayashi K."/>
            <person name="Nakayama T."/>
            <person name="Ogasawara N."/>
            <person name="Watabe K."/>
        </authorList>
    </citation>
    <scope>SUBCELLULAR LOCATION</scope>
    <scope>DISRUPTION PHENOTYPE</scope>
    <scope>TRANSCRIPTION</scope>
    <source>
        <strain>168</strain>
    </source>
</reference>
<reference key="5">
    <citation type="journal article" date="2006" name="J. Biochem.">
        <title>Modification of GerQ reveals a functional relationship between Tgl and YabG in the coat of Bacillus subtilis spores.</title>
        <authorList>
            <person name="Kuwana R."/>
            <person name="Okuda N."/>
            <person name="Takamatsu H."/>
            <person name="Watabe K."/>
        </authorList>
    </citation>
    <scope>POSSIBLE ROLE IN CROSS-LINKING OF GERQ</scope>
    <scope>DISRUPTION PHENOTYPE</scope>
</reference>
<accession>P37548</accession>
<evidence type="ECO:0000269" key="1">
    <source>
    </source>
</evidence>
<evidence type="ECO:0000269" key="2">
    <source>
    </source>
</evidence>
<evidence type="ECO:0000269" key="3">
    <source>
    </source>
</evidence>
<evidence type="ECO:0000305" key="4"/>
<feature type="chain" id="PRO_0000049441" description="Sporulation-specific protease YabG">
    <location>
        <begin position="1"/>
        <end position="290"/>
    </location>
</feature>
<organism>
    <name type="scientific">Bacillus subtilis (strain 168)</name>
    <dbReference type="NCBI Taxonomy" id="224308"/>
    <lineage>
        <taxon>Bacteria</taxon>
        <taxon>Bacillati</taxon>
        <taxon>Bacillota</taxon>
        <taxon>Bacilli</taxon>
        <taxon>Bacillales</taxon>
        <taxon>Bacillaceae</taxon>
        <taxon>Bacillus</taxon>
    </lineage>
</organism>
<protein>
    <recommendedName>
        <fullName>Sporulation-specific protease YabG</fullName>
        <ecNumber>3.4.-.-</ecNumber>
    </recommendedName>
</protein>
<keyword id="KW-0378">Hydrolase</keyword>
<keyword id="KW-0472">Membrane</keyword>
<keyword id="KW-1185">Reference proteome</keyword>
<keyword id="KW-0749">Sporulation</keyword>
<dbReference type="EC" id="3.4.-.-"/>
<dbReference type="EMBL" id="D26185">
    <property type="protein sequence ID" value="BAA05278.1"/>
    <property type="molecule type" value="Genomic_DNA"/>
</dbReference>
<dbReference type="EMBL" id="AL009126">
    <property type="protein sequence ID" value="CAB11819.1"/>
    <property type="molecule type" value="Genomic_DNA"/>
</dbReference>
<dbReference type="PIR" id="S66072">
    <property type="entry name" value="S66072"/>
</dbReference>
<dbReference type="RefSeq" id="WP_003243478.1">
    <property type="nucleotide sequence ID" value="NZ_OZ025638.1"/>
</dbReference>
<dbReference type="SMR" id="P37548"/>
<dbReference type="FunCoup" id="P37548">
    <property type="interactions" value="134"/>
</dbReference>
<dbReference type="STRING" id="224308.BSU00430"/>
<dbReference type="MEROPS" id="U57.001"/>
<dbReference type="PaxDb" id="224308-BSU00430"/>
<dbReference type="EnsemblBacteria" id="CAB11819">
    <property type="protein sequence ID" value="CAB11819"/>
    <property type="gene ID" value="BSU_00430"/>
</dbReference>
<dbReference type="GeneID" id="937005"/>
<dbReference type="KEGG" id="bsu:BSU00430"/>
<dbReference type="PATRIC" id="fig|224308.179.peg.43"/>
<dbReference type="eggNOG" id="ENOG502Z7P7">
    <property type="taxonomic scope" value="Bacteria"/>
</dbReference>
<dbReference type="InParanoid" id="P37548"/>
<dbReference type="OrthoDB" id="9785306at2"/>
<dbReference type="PhylomeDB" id="P37548"/>
<dbReference type="BioCyc" id="BSUB:BSU00430-MONOMER"/>
<dbReference type="Proteomes" id="UP000001570">
    <property type="component" value="Chromosome"/>
</dbReference>
<dbReference type="GO" id="GO:0043593">
    <property type="term" value="C:endospore coat"/>
    <property type="evidence" value="ECO:0000315"/>
    <property type="project" value="CACAO"/>
</dbReference>
<dbReference type="GO" id="GO:0016020">
    <property type="term" value="C:membrane"/>
    <property type="evidence" value="ECO:0007669"/>
    <property type="project" value="UniProtKB-KW"/>
</dbReference>
<dbReference type="GO" id="GO:0016787">
    <property type="term" value="F:hydrolase activity"/>
    <property type="evidence" value="ECO:0007669"/>
    <property type="project" value="UniProtKB-KW"/>
</dbReference>
<dbReference type="GO" id="GO:0030435">
    <property type="term" value="P:sporulation resulting in formation of a cellular spore"/>
    <property type="evidence" value="ECO:0007669"/>
    <property type="project" value="UniProtKB-KW"/>
</dbReference>
<dbReference type="InterPro" id="IPR008764">
    <property type="entry name" value="Peptidase_U57"/>
</dbReference>
<dbReference type="NCBIfam" id="TIGR02855">
    <property type="entry name" value="spore_yabG"/>
    <property type="match status" value="1"/>
</dbReference>
<dbReference type="Pfam" id="PF05582">
    <property type="entry name" value="Peptidase_U57"/>
    <property type="match status" value="1"/>
</dbReference>
<dbReference type="PIRSF" id="PIRSF011575">
    <property type="entry name" value="YabG"/>
    <property type="match status" value="1"/>
</dbReference>
<name>YABG_BACSU</name>